<accession>Q3KKW5</accession>
<keyword id="KW-0030">Aminoacyl-tRNA synthetase</keyword>
<keyword id="KW-0067">ATP-binding</keyword>
<keyword id="KW-0963">Cytoplasm</keyword>
<keyword id="KW-0436">Ligase</keyword>
<keyword id="KW-0547">Nucleotide-binding</keyword>
<keyword id="KW-0648">Protein biosynthesis</keyword>
<name>SYS_CHLTA</name>
<gene>
    <name evidence="1" type="primary">serS</name>
    <name type="ordered locus">CTA_0791</name>
</gene>
<dbReference type="EC" id="6.1.1.11" evidence="1"/>
<dbReference type="EMBL" id="CP000051">
    <property type="protein sequence ID" value="AAX51007.1"/>
    <property type="molecule type" value="Genomic_DNA"/>
</dbReference>
<dbReference type="RefSeq" id="WP_009872106.1">
    <property type="nucleotide sequence ID" value="NC_007429.1"/>
</dbReference>
<dbReference type="SMR" id="Q3KKW5"/>
<dbReference type="KEGG" id="cta:CTA_0791"/>
<dbReference type="HOGENOM" id="CLU_023797_1_1_0"/>
<dbReference type="UniPathway" id="UPA00906">
    <property type="reaction ID" value="UER00895"/>
</dbReference>
<dbReference type="Proteomes" id="UP000002532">
    <property type="component" value="Chromosome"/>
</dbReference>
<dbReference type="GO" id="GO:0005737">
    <property type="term" value="C:cytoplasm"/>
    <property type="evidence" value="ECO:0007669"/>
    <property type="project" value="UniProtKB-SubCell"/>
</dbReference>
<dbReference type="GO" id="GO:0005524">
    <property type="term" value="F:ATP binding"/>
    <property type="evidence" value="ECO:0007669"/>
    <property type="project" value="UniProtKB-UniRule"/>
</dbReference>
<dbReference type="GO" id="GO:0004828">
    <property type="term" value="F:serine-tRNA ligase activity"/>
    <property type="evidence" value="ECO:0007669"/>
    <property type="project" value="UniProtKB-UniRule"/>
</dbReference>
<dbReference type="GO" id="GO:0016260">
    <property type="term" value="P:selenocysteine biosynthetic process"/>
    <property type="evidence" value="ECO:0007669"/>
    <property type="project" value="UniProtKB-UniRule"/>
</dbReference>
<dbReference type="GO" id="GO:0006434">
    <property type="term" value="P:seryl-tRNA aminoacylation"/>
    <property type="evidence" value="ECO:0007669"/>
    <property type="project" value="UniProtKB-UniRule"/>
</dbReference>
<dbReference type="CDD" id="cd00770">
    <property type="entry name" value="SerRS_core"/>
    <property type="match status" value="1"/>
</dbReference>
<dbReference type="Gene3D" id="3.30.930.10">
    <property type="entry name" value="Bira Bifunctional Protein, Domain 2"/>
    <property type="match status" value="1"/>
</dbReference>
<dbReference type="Gene3D" id="1.10.287.40">
    <property type="entry name" value="Serine-tRNA synthetase, tRNA binding domain"/>
    <property type="match status" value="1"/>
</dbReference>
<dbReference type="HAMAP" id="MF_00176">
    <property type="entry name" value="Ser_tRNA_synth_type1"/>
    <property type="match status" value="1"/>
</dbReference>
<dbReference type="InterPro" id="IPR002314">
    <property type="entry name" value="aa-tRNA-synt_IIb"/>
</dbReference>
<dbReference type="InterPro" id="IPR006195">
    <property type="entry name" value="aa-tRNA-synth_II"/>
</dbReference>
<dbReference type="InterPro" id="IPR045864">
    <property type="entry name" value="aa-tRNA-synth_II/BPL/LPL"/>
</dbReference>
<dbReference type="InterPro" id="IPR002317">
    <property type="entry name" value="Ser-tRNA-ligase_type_1"/>
</dbReference>
<dbReference type="InterPro" id="IPR015866">
    <property type="entry name" value="Ser-tRNA-synth_1_N"/>
</dbReference>
<dbReference type="InterPro" id="IPR042103">
    <property type="entry name" value="SerRS_1_N_sf"/>
</dbReference>
<dbReference type="InterPro" id="IPR033729">
    <property type="entry name" value="SerRS_core"/>
</dbReference>
<dbReference type="InterPro" id="IPR010978">
    <property type="entry name" value="tRNA-bd_arm"/>
</dbReference>
<dbReference type="NCBIfam" id="TIGR00414">
    <property type="entry name" value="serS"/>
    <property type="match status" value="1"/>
</dbReference>
<dbReference type="PANTHER" id="PTHR43697:SF1">
    <property type="entry name" value="SERINE--TRNA LIGASE"/>
    <property type="match status" value="1"/>
</dbReference>
<dbReference type="PANTHER" id="PTHR43697">
    <property type="entry name" value="SERYL-TRNA SYNTHETASE"/>
    <property type="match status" value="1"/>
</dbReference>
<dbReference type="Pfam" id="PF02403">
    <property type="entry name" value="Seryl_tRNA_N"/>
    <property type="match status" value="1"/>
</dbReference>
<dbReference type="Pfam" id="PF00587">
    <property type="entry name" value="tRNA-synt_2b"/>
    <property type="match status" value="1"/>
</dbReference>
<dbReference type="PIRSF" id="PIRSF001529">
    <property type="entry name" value="Ser-tRNA-synth_IIa"/>
    <property type="match status" value="1"/>
</dbReference>
<dbReference type="PRINTS" id="PR00981">
    <property type="entry name" value="TRNASYNTHSER"/>
</dbReference>
<dbReference type="SUPFAM" id="SSF55681">
    <property type="entry name" value="Class II aaRS and biotin synthetases"/>
    <property type="match status" value="1"/>
</dbReference>
<dbReference type="SUPFAM" id="SSF46589">
    <property type="entry name" value="tRNA-binding arm"/>
    <property type="match status" value="1"/>
</dbReference>
<dbReference type="PROSITE" id="PS50862">
    <property type="entry name" value="AA_TRNA_LIGASE_II"/>
    <property type="match status" value="1"/>
</dbReference>
<reference key="1">
    <citation type="journal article" date="2005" name="Infect. Immun.">
        <title>Comparative genomic analysis of Chlamydia trachomatis oculotropic and genitotropic strains.</title>
        <authorList>
            <person name="Carlson J.H."/>
            <person name="Porcella S.F."/>
            <person name="McClarty G."/>
            <person name="Caldwell H.D."/>
        </authorList>
    </citation>
    <scope>NUCLEOTIDE SEQUENCE [LARGE SCALE GENOMIC DNA]</scope>
    <source>
        <strain>ATCC VR-571B / DSM 19440 / HAR-13</strain>
    </source>
</reference>
<feature type="chain" id="PRO_1000019652" description="Serine--tRNA ligase">
    <location>
        <begin position="1"/>
        <end position="428"/>
    </location>
</feature>
<feature type="binding site" evidence="1">
    <location>
        <begin position="231"/>
        <end position="233"/>
    </location>
    <ligand>
        <name>L-serine</name>
        <dbReference type="ChEBI" id="CHEBI:33384"/>
    </ligand>
</feature>
<feature type="binding site" evidence="1">
    <location>
        <begin position="262"/>
        <end position="264"/>
    </location>
    <ligand>
        <name>ATP</name>
        <dbReference type="ChEBI" id="CHEBI:30616"/>
    </ligand>
</feature>
<feature type="binding site" evidence="1">
    <location>
        <position position="278"/>
    </location>
    <ligand>
        <name>ATP</name>
        <dbReference type="ChEBI" id="CHEBI:30616"/>
    </ligand>
</feature>
<feature type="binding site" evidence="1">
    <location>
        <position position="285"/>
    </location>
    <ligand>
        <name>L-serine</name>
        <dbReference type="ChEBI" id="CHEBI:33384"/>
    </ligand>
</feature>
<feature type="binding site" evidence="1">
    <location>
        <begin position="349"/>
        <end position="352"/>
    </location>
    <ligand>
        <name>ATP</name>
        <dbReference type="ChEBI" id="CHEBI:30616"/>
    </ligand>
</feature>
<feature type="binding site" evidence="1">
    <location>
        <position position="384"/>
    </location>
    <ligand>
        <name>L-serine</name>
        <dbReference type="ChEBI" id="CHEBI:33384"/>
    </ligand>
</feature>
<sequence length="428" mass="48315">MLDIRLIRKEPKECESRLQKKDPAISLERLLDLDKTVRQLKADSEALLAKRKVLSGQIHKAKVANENADALIQEVNTIADQLVAFETTLQEQEALLEDLMARLPNYPDEDVPVSPDKTGNQVIKGHGEVPTFPFPPKHHMQLNEALQILDFKLPAKTTGSGWPAYCNEGVLLEWALLTYLLNKQQAHGFQLWLPPLLVKRDILFGSGQIPKFDGQYYRVEDGDQSLFLIPTAEVVLNGFHSQEILNEQDLPLCYAAFTPCFRREAGAGGAHERGLVRVHQFHKVEMFAFTTPEQEEVVYQKMLHVVEEILSELQLPYQLSLLSTGDMSFTAKKTIDAEVWLPGQKAFYEVSSISKCGDFQARRSETRYRDAQGKLHFVNTLNGSGLATPRLLVAILENYQQADGSVVIPSVLRPYMNNQEILLPKTVR</sequence>
<protein>
    <recommendedName>
        <fullName evidence="1">Serine--tRNA ligase</fullName>
        <ecNumber evidence="1">6.1.1.11</ecNumber>
    </recommendedName>
    <alternativeName>
        <fullName evidence="1">Seryl-tRNA synthetase</fullName>
        <shortName evidence="1">SerRS</shortName>
    </alternativeName>
    <alternativeName>
        <fullName evidence="1">Seryl-tRNA(Ser/Sec) synthetase</fullName>
    </alternativeName>
</protein>
<proteinExistence type="inferred from homology"/>
<organism>
    <name type="scientific">Chlamydia trachomatis serovar A (strain ATCC VR-571B / DSM 19440 / HAR-13)</name>
    <dbReference type="NCBI Taxonomy" id="315277"/>
    <lineage>
        <taxon>Bacteria</taxon>
        <taxon>Pseudomonadati</taxon>
        <taxon>Chlamydiota</taxon>
        <taxon>Chlamydiia</taxon>
        <taxon>Chlamydiales</taxon>
        <taxon>Chlamydiaceae</taxon>
        <taxon>Chlamydia/Chlamydophila group</taxon>
        <taxon>Chlamydia</taxon>
    </lineage>
</organism>
<comment type="function">
    <text evidence="1">Catalyzes the attachment of serine to tRNA(Ser). Is also able to aminoacylate tRNA(Sec) with serine, to form the misacylated tRNA L-seryl-tRNA(Sec), which will be further converted into selenocysteinyl-tRNA(Sec).</text>
</comment>
<comment type="catalytic activity">
    <reaction evidence="1">
        <text>tRNA(Ser) + L-serine + ATP = L-seryl-tRNA(Ser) + AMP + diphosphate + H(+)</text>
        <dbReference type="Rhea" id="RHEA:12292"/>
        <dbReference type="Rhea" id="RHEA-COMP:9669"/>
        <dbReference type="Rhea" id="RHEA-COMP:9703"/>
        <dbReference type="ChEBI" id="CHEBI:15378"/>
        <dbReference type="ChEBI" id="CHEBI:30616"/>
        <dbReference type="ChEBI" id="CHEBI:33019"/>
        <dbReference type="ChEBI" id="CHEBI:33384"/>
        <dbReference type="ChEBI" id="CHEBI:78442"/>
        <dbReference type="ChEBI" id="CHEBI:78533"/>
        <dbReference type="ChEBI" id="CHEBI:456215"/>
        <dbReference type="EC" id="6.1.1.11"/>
    </reaction>
</comment>
<comment type="catalytic activity">
    <reaction evidence="1">
        <text>tRNA(Sec) + L-serine + ATP = L-seryl-tRNA(Sec) + AMP + diphosphate + H(+)</text>
        <dbReference type="Rhea" id="RHEA:42580"/>
        <dbReference type="Rhea" id="RHEA-COMP:9742"/>
        <dbReference type="Rhea" id="RHEA-COMP:10128"/>
        <dbReference type="ChEBI" id="CHEBI:15378"/>
        <dbReference type="ChEBI" id="CHEBI:30616"/>
        <dbReference type="ChEBI" id="CHEBI:33019"/>
        <dbReference type="ChEBI" id="CHEBI:33384"/>
        <dbReference type="ChEBI" id="CHEBI:78442"/>
        <dbReference type="ChEBI" id="CHEBI:78533"/>
        <dbReference type="ChEBI" id="CHEBI:456215"/>
        <dbReference type="EC" id="6.1.1.11"/>
    </reaction>
</comment>
<comment type="pathway">
    <text evidence="1">Aminoacyl-tRNA biosynthesis; selenocysteinyl-tRNA(Sec) biosynthesis; L-seryl-tRNA(Sec) from L-serine and tRNA(Sec): step 1/1.</text>
</comment>
<comment type="subunit">
    <text evidence="1">Homodimer. The tRNA molecule binds across the dimer.</text>
</comment>
<comment type="subcellular location">
    <subcellularLocation>
        <location evidence="1">Cytoplasm</location>
    </subcellularLocation>
</comment>
<comment type="domain">
    <text evidence="1">Consists of two distinct domains, a catalytic core and a N-terminal extension that is involved in tRNA binding.</text>
</comment>
<comment type="similarity">
    <text evidence="1">Belongs to the class-II aminoacyl-tRNA synthetase family. Type-1 seryl-tRNA synthetase subfamily.</text>
</comment>
<evidence type="ECO:0000255" key="1">
    <source>
        <dbReference type="HAMAP-Rule" id="MF_00176"/>
    </source>
</evidence>